<proteinExistence type="inferred from homology"/>
<feature type="chain" id="PRO_1000022743" description="Trigger factor">
    <location>
        <begin position="1"/>
        <end position="444"/>
    </location>
</feature>
<feature type="domain" description="PPIase FKBP-type" evidence="1">
    <location>
        <begin position="166"/>
        <end position="251"/>
    </location>
</feature>
<evidence type="ECO:0000255" key="1">
    <source>
        <dbReference type="HAMAP-Rule" id="MF_00303"/>
    </source>
</evidence>
<protein>
    <recommendedName>
        <fullName evidence="1">Trigger factor</fullName>
        <shortName evidence="1">TF</shortName>
        <ecNumber evidence="1">5.2.1.8</ecNumber>
    </recommendedName>
    <alternativeName>
        <fullName evidence="1">PPIase</fullName>
    </alternativeName>
</protein>
<gene>
    <name evidence="1" type="primary">tig</name>
    <name type="ordered locus">Rsph17025_1349</name>
</gene>
<comment type="function">
    <text evidence="1">Involved in protein export. Acts as a chaperone by maintaining the newly synthesized protein in an open conformation. Functions as a peptidyl-prolyl cis-trans isomerase.</text>
</comment>
<comment type="catalytic activity">
    <reaction evidence="1">
        <text>[protein]-peptidylproline (omega=180) = [protein]-peptidylproline (omega=0)</text>
        <dbReference type="Rhea" id="RHEA:16237"/>
        <dbReference type="Rhea" id="RHEA-COMP:10747"/>
        <dbReference type="Rhea" id="RHEA-COMP:10748"/>
        <dbReference type="ChEBI" id="CHEBI:83833"/>
        <dbReference type="ChEBI" id="CHEBI:83834"/>
        <dbReference type="EC" id="5.2.1.8"/>
    </reaction>
</comment>
<comment type="subcellular location">
    <subcellularLocation>
        <location>Cytoplasm</location>
    </subcellularLocation>
    <text evidence="1">About half TF is bound to the ribosome near the polypeptide exit tunnel while the other half is free in the cytoplasm.</text>
</comment>
<comment type="domain">
    <text evidence="1">Consists of 3 domains; the N-terminus binds the ribosome, the middle domain has PPIase activity, while the C-terminus has intrinsic chaperone activity on its own.</text>
</comment>
<comment type="similarity">
    <text evidence="1">Belongs to the FKBP-type PPIase family. Tig subfamily.</text>
</comment>
<reference key="1">
    <citation type="submission" date="2007-04" db="EMBL/GenBank/DDBJ databases">
        <title>Complete sequence of chromosome of Rhodobacter sphaeroides ATCC 17025.</title>
        <authorList>
            <consortium name="US DOE Joint Genome Institute"/>
            <person name="Copeland A."/>
            <person name="Lucas S."/>
            <person name="Lapidus A."/>
            <person name="Barry K."/>
            <person name="Detter J.C."/>
            <person name="Glavina del Rio T."/>
            <person name="Hammon N."/>
            <person name="Israni S."/>
            <person name="Dalin E."/>
            <person name="Tice H."/>
            <person name="Pitluck S."/>
            <person name="Chertkov O."/>
            <person name="Brettin T."/>
            <person name="Bruce D."/>
            <person name="Han C."/>
            <person name="Schmutz J."/>
            <person name="Larimer F."/>
            <person name="Land M."/>
            <person name="Hauser L."/>
            <person name="Kyrpides N."/>
            <person name="Kim E."/>
            <person name="Richardson P."/>
            <person name="Mackenzie C."/>
            <person name="Choudhary M."/>
            <person name="Donohue T.J."/>
            <person name="Kaplan S."/>
        </authorList>
    </citation>
    <scope>NUCLEOTIDE SEQUENCE [LARGE SCALE GENOMIC DNA]</scope>
    <source>
        <strain>ATCC 17025 / ATH 2.4.3</strain>
    </source>
</reference>
<keyword id="KW-0131">Cell cycle</keyword>
<keyword id="KW-0132">Cell division</keyword>
<keyword id="KW-0143">Chaperone</keyword>
<keyword id="KW-0963">Cytoplasm</keyword>
<keyword id="KW-0413">Isomerase</keyword>
<keyword id="KW-0697">Rotamase</keyword>
<accession>A4WS82</accession>
<name>TIG_CERS5</name>
<organism>
    <name type="scientific">Cereibacter sphaeroides (strain ATCC 17025 / ATH 2.4.3)</name>
    <name type="common">Rhodobacter sphaeroides</name>
    <dbReference type="NCBI Taxonomy" id="349102"/>
    <lineage>
        <taxon>Bacteria</taxon>
        <taxon>Pseudomonadati</taxon>
        <taxon>Pseudomonadota</taxon>
        <taxon>Alphaproteobacteria</taxon>
        <taxon>Rhodobacterales</taxon>
        <taxon>Paracoccaceae</taxon>
        <taxon>Cereibacter</taxon>
    </lineage>
</organism>
<dbReference type="EC" id="5.2.1.8" evidence="1"/>
<dbReference type="EMBL" id="CP000661">
    <property type="protein sequence ID" value="ABP70246.1"/>
    <property type="molecule type" value="Genomic_DNA"/>
</dbReference>
<dbReference type="SMR" id="A4WS82"/>
<dbReference type="STRING" id="349102.Rsph17025_1349"/>
<dbReference type="KEGG" id="rsq:Rsph17025_1349"/>
<dbReference type="eggNOG" id="COG0544">
    <property type="taxonomic scope" value="Bacteria"/>
</dbReference>
<dbReference type="HOGENOM" id="CLU_033058_2_2_5"/>
<dbReference type="BioCyc" id="RSPH349102:G1G8M-1387-MONOMER"/>
<dbReference type="GO" id="GO:0005737">
    <property type="term" value="C:cytoplasm"/>
    <property type="evidence" value="ECO:0007669"/>
    <property type="project" value="UniProtKB-SubCell"/>
</dbReference>
<dbReference type="GO" id="GO:0003755">
    <property type="term" value="F:peptidyl-prolyl cis-trans isomerase activity"/>
    <property type="evidence" value="ECO:0007669"/>
    <property type="project" value="UniProtKB-UniRule"/>
</dbReference>
<dbReference type="GO" id="GO:0051301">
    <property type="term" value="P:cell division"/>
    <property type="evidence" value="ECO:0007669"/>
    <property type="project" value="UniProtKB-KW"/>
</dbReference>
<dbReference type="GO" id="GO:0006457">
    <property type="term" value="P:protein folding"/>
    <property type="evidence" value="ECO:0007669"/>
    <property type="project" value="UniProtKB-UniRule"/>
</dbReference>
<dbReference type="GO" id="GO:0015031">
    <property type="term" value="P:protein transport"/>
    <property type="evidence" value="ECO:0007669"/>
    <property type="project" value="UniProtKB-UniRule"/>
</dbReference>
<dbReference type="FunFam" id="3.10.50.40:FF:000001">
    <property type="entry name" value="Trigger factor"/>
    <property type="match status" value="1"/>
</dbReference>
<dbReference type="Gene3D" id="3.10.50.40">
    <property type="match status" value="1"/>
</dbReference>
<dbReference type="Gene3D" id="3.30.70.1050">
    <property type="entry name" value="Trigger factor ribosome-binding domain"/>
    <property type="match status" value="1"/>
</dbReference>
<dbReference type="Gene3D" id="1.10.3120.10">
    <property type="entry name" value="Trigger factor, C-terminal domain"/>
    <property type="match status" value="1"/>
</dbReference>
<dbReference type="HAMAP" id="MF_00303">
    <property type="entry name" value="Trigger_factor_Tig"/>
    <property type="match status" value="1"/>
</dbReference>
<dbReference type="InterPro" id="IPR046357">
    <property type="entry name" value="PPIase_dom_sf"/>
</dbReference>
<dbReference type="InterPro" id="IPR001179">
    <property type="entry name" value="PPIase_FKBP_dom"/>
</dbReference>
<dbReference type="InterPro" id="IPR005215">
    <property type="entry name" value="Trig_fac"/>
</dbReference>
<dbReference type="InterPro" id="IPR008880">
    <property type="entry name" value="Trigger_fac_C"/>
</dbReference>
<dbReference type="InterPro" id="IPR037041">
    <property type="entry name" value="Trigger_fac_C_sf"/>
</dbReference>
<dbReference type="InterPro" id="IPR008881">
    <property type="entry name" value="Trigger_fac_ribosome-bd_bac"/>
</dbReference>
<dbReference type="InterPro" id="IPR036611">
    <property type="entry name" value="Trigger_fac_ribosome-bd_sf"/>
</dbReference>
<dbReference type="InterPro" id="IPR027304">
    <property type="entry name" value="Trigger_fact/SurA_dom_sf"/>
</dbReference>
<dbReference type="NCBIfam" id="TIGR00115">
    <property type="entry name" value="tig"/>
    <property type="match status" value="1"/>
</dbReference>
<dbReference type="Pfam" id="PF00254">
    <property type="entry name" value="FKBP_C"/>
    <property type="match status" value="1"/>
</dbReference>
<dbReference type="Pfam" id="PF05698">
    <property type="entry name" value="Trigger_C"/>
    <property type="match status" value="1"/>
</dbReference>
<dbReference type="Pfam" id="PF05697">
    <property type="entry name" value="Trigger_N"/>
    <property type="match status" value="1"/>
</dbReference>
<dbReference type="PIRSF" id="PIRSF003095">
    <property type="entry name" value="Trigger_factor"/>
    <property type="match status" value="1"/>
</dbReference>
<dbReference type="SUPFAM" id="SSF54534">
    <property type="entry name" value="FKBP-like"/>
    <property type="match status" value="1"/>
</dbReference>
<dbReference type="SUPFAM" id="SSF109998">
    <property type="entry name" value="Triger factor/SurA peptide-binding domain-like"/>
    <property type="match status" value="1"/>
</dbReference>
<dbReference type="SUPFAM" id="SSF102735">
    <property type="entry name" value="Trigger factor ribosome-binding domain"/>
    <property type="match status" value="1"/>
</dbReference>
<dbReference type="PROSITE" id="PS50059">
    <property type="entry name" value="FKBP_PPIASE"/>
    <property type="match status" value="1"/>
</dbReference>
<sequence length="444" mass="49136">MQVTETLKEGLKRAYTITVTAAELDAKVQEKLVEAQPDIEMKGFRKGKVPLAMLRKQFGPRLLGDAMQDAIDGAMRDHLETSGDRPAMQPEVRMVDGETWQEGTDVVVEMKYEALPEIPEIETSKVTLERLVVKADEAAVDEALKNLAESAQNFDDRRKGSKAKDGDQIVIDFKGSVDGELFEGGSAEDYPLVLGSGSFIPGFEEQLVGAKVEDEVTVKVTFPTEYGAKHLAGKEAEFACTVKAVKAPKPAEIDDELAKKYGAEDLAALKAQIAERLEAEYKGASRAVLKRALLDQLDTMVSFELPSKLVEAEAHQIAHQLWHEEHPEEHGHNHGTIEPTDEHKALAERRVRLGLLLAEIGRKAEVTVTDAEMTQAVLAQARQYPGQERAYFEFVQKNPQIQQQLRAPIFEDKVVDLILEGATVTEKEVGKDDLQKAIEALDEM</sequence>